<protein>
    <recommendedName>
        <fullName evidence="1">Large ribosomal subunit protein bL25</fullName>
    </recommendedName>
    <alternativeName>
        <fullName evidence="2">50S ribosomal protein L25</fullName>
    </alternativeName>
    <alternativeName>
        <fullName evidence="1">General stress protein CTC</fullName>
    </alternativeName>
</protein>
<sequence>MVDFILNAQVRSDLGKGASRRLRRNAAQVPAVIYGGDKEPQSVTLELREIAKLLENEAAFSHVIALNVGGAKETVLIKALQRHPAKGFVMHADFLRVVADHKLTAHVPLHFINEDVAVGVKQAGGEISHTISEVEVSCLPKDLPEFIEVDMAKVELGQIVHLSDLKAPKGVELVQLAHGNDLAVANIHASRVVKEEGSEEGAAE</sequence>
<evidence type="ECO:0000255" key="1">
    <source>
        <dbReference type="HAMAP-Rule" id="MF_01334"/>
    </source>
</evidence>
<evidence type="ECO:0000305" key="2"/>
<keyword id="KW-0687">Ribonucleoprotein</keyword>
<keyword id="KW-0689">Ribosomal protein</keyword>
<keyword id="KW-0694">RNA-binding</keyword>
<keyword id="KW-0699">rRNA-binding</keyword>
<dbReference type="EMBL" id="CP000744">
    <property type="protein sequence ID" value="ABR83015.1"/>
    <property type="molecule type" value="Genomic_DNA"/>
</dbReference>
<dbReference type="RefSeq" id="WP_003151680.1">
    <property type="nucleotide sequence ID" value="NC_009656.1"/>
</dbReference>
<dbReference type="SMR" id="A6VC67"/>
<dbReference type="GeneID" id="77223176"/>
<dbReference type="KEGG" id="pap:PSPA7_5321"/>
<dbReference type="HOGENOM" id="CLU_075939_0_1_6"/>
<dbReference type="Proteomes" id="UP000001582">
    <property type="component" value="Chromosome"/>
</dbReference>
<dbReference type="GO" id="GO:0022625">
    <property type="term" value="C:cytosolic large ribosomal subunit"/>
    <property type="evidence" value="ECO:0007669"/>
    <property type="project" value="TreeGrafter"/>
</dbReference>
<dbReference type="GO" id="GO:0008097">
    <property type="term" value="F:5S rRNA binding"/>
    <property type="evidence" value="ECO:0007669"/>
    <property type="project" value="InterPro"/>
</dbReference>
<dbReference type="GO" id="GO:0003735">
    <property type="term" value="F:structural constituent of ribosome"/>
    <property type="evidence" value="ECO:0007669"/>
    <property type="project" value="InterPro"/>
</dbReference>
<dbReference type="GO" id="GO:0006412">
    <property type="term" value="P:translation"/>
    <property type="evidence" value="ECO:0007669"/>
    <property type="project" value="UniProtKB-UniRule"/>
</dbReference>
<dbReference type="CDD" id="cd00495">
    <property type="entry name" value="Ribosomal_L25_TL5_CTC"/>
    <property type="match status" value="1"/>
</dbReference>
<dbReference type="FunFam" id="2.170.120.20:FF:000007">
    <property type="entry name" value="50S ribosomal protein L25"/>
    <property type="match status" value="1"/>
</dbReference>
<dbReference type="FunFam" id="2.40.240.10:FF:000022">
    <property type="entry name" value="50S ribosomal protein L25"/>
    <property type="match status" value="1"/>
</dbReference>
<dbReference type="Gene3D" id="2.170.120.20">
    <property type="entry name" value="Ribosomal protein L25, beta domain"/>
    <property type="match status" value="1"/>
</dbReference>
<dbReference type="Gene3D" id="2.40.240.10">
    <property type="entry name" value="Ribosomal Protein L25, Chain P"/>
    <property type="match status" value="1"/>
</dbReference>
<dbReference type="HAMAP" id="MF_01334">
    <property type="entry name" value="Ribosomal_bL25_CTC"/>
    <property type="match status" value="1"/>
</dbReference>
<dbReference type="InterPro" id="IPR020056">
    <property type="entry name" value="Rbsml_bL25/Gln-tRNA_synth_N"/>
</dbReference>
<dbReference type="InterPro" id="IPR011035">
    <property type="entry name" value="Ribosomal_bL25/Gln-tRNA_synth"/>
</dbReference>
<dbReference type="InterPro" id="IPR020057">
    <property type="entry name" value="Ribosomal_bL25_b-dom"/>
</dbReference>
<dbReference type="InterPro" id="IPR037121">
    <property type="entry name" value="Ribosomal_bL25_C"/>
</dbReference>
<dbReference type="InterPro" id="IPR001021">
    <property type="entry name" value="Ribosomal_bL25_long"/>
</dbReference>
<dbReference type="InterPro" id="IPR029751">
    <property type="entry name" value="Ribosomal_L25_dom"/>
</dbReference>
<dbReference type="InterPro" id="IPR020930">
    <property type="entry name" value="Ribosomal_uL5_bac-type"/>
</dbReference>
<dbReference type="NCBIfam" id="TIGR00731">
    <property type="entry name" value="bL25_bact_ctc"/>
    <property type="match status" value="1"/>
</dbReference>
<dbReference type="NCBIfam" id="NF004128">
    <property type="entry name" value="PRK05618.1-2"/>
    <property type="match status" value="1"/>
</dbReference>
<dbReference type="NCBIfam" id="NF004130">
    <property type="entry name" value="PRK05618.1-5"/>
    <property type="match status" value="1"/>
</dbReference>
<dbReference type="NCBIfam" id="NF004612">
    <property type="entry name" value="PRK05943.1"/>
    <property type="match status" value="1"/>
</dbReference>
<dbReference type="PANTHER" id="PTHR33284">
    <property type="entry name" value="RIBOSOMAL PROTEIN L25/GLN-TRNA SYNTHETASE, ANTI-CODON-BINDING DOMAIN-CONTAINING PROTEIN"/>
    <property type="match status" value="1"/>
</dbReference>
<dbReference type="PANTHER" id="PTHR33284:SF1">
    <property type="entry name" value="RIBOSOMAL PROTEIN L25_GLN-TRNA SYNTHETASE, ANTI-CODON-BINDING DOMAIN-CONTAINING PROTEIN"/>
    <property type="match status" value="1"/>
</dbReference>
<dbReference type="Pfam" id="PF01386">
    <property type="entry name" value="Ribosomal_L25p"/>
    <property type="match status" value="1"/>
</dbReference>
<dbReference type="Pfam" id="PF14693">
    <property type="entry name" value="Ribosomal_TL5_C"/>
    <property type="match status" value="1"/>
</dbReference>
<dbReference type="SUPFAM" id="SSF50715">
    <property type="entry name" value="Ribosomal protein L25-like"/>
    <property type="match status" value="1"/>
</dbReference>
<proteinExistence type="inferred from homology"/>
<feature type="chain" id="PRO_1000052917" description="Large ribosomal subunit protein bL25">
    <location>
        <begin position="1"/>
        <end position="204"/>
    </location>
</feature>
<reference key="1">
    <citation type="submission" date="2007-06" db="EMBL/GenBank/DDBJ databases">
        <authorList>
            <person name="Dodson R.J."/>
            <person name="Harkins D."/>
            <person name="Paulsen I.T."/>
        </authorList>
    </citation>
    <scope>NUCLEOTIDE SEQUENCE [LARGE SCALE GENOMIC DNA]</scope>
    <source>
        <strain>DSM 24068 / PA7</strain>
    </source>
</reference>
<comment type="function">
    <text evidence="1">This is one of the proteins that binds to the 5S RNA in the ribosome where it forms part of the central protuberance.</text>
</comment>
<comment type="subunit">
    <text evidence="1">Part of the 50S ribosomal subunit; part of the 5S rRNA/L5/L18/L25 subcomplex. Contacts the 5S rRNA. Binds to the 5S rRNA independently of L5 and L18.</text>
</comment>
<comment type="similarity">
    <text evidence="1">Belongs to the bacterial ribosomal protein bL25 family. CTC subfamily.</text>
</comment>
<gene>
    <name evidence="1" type="primary">rplY</name>
    <name evidence="1" type="synonym">ctc</name>
    <name type="ordered locus">PSPA7_5321</name>
</gene>
<name>RL25_PSEP7</name>
<organism>
    <name type="scientific">Pseudomonas paraeruginosa (strain DSM 24068 / PA7)</name>
    <name type="common">Pseudomonas aeruginosa (strain PA7)</name>
    <dbReference type="NCBI Taxonomy" id="381754"/>
    <lineage>
        <taxon>Bacteria</taxon>
        <taxon>Pseudomonadati</taxon>
        <taxon>Pseudomonadota</taxon>
        <taxon>Gammaproteobacteria</taxon>
        <taxon>Pseudomonadales</taxon>
        <taxon>Pseudomonadaceae</taxon>
        <taxon>Pseudomonas</taxon>
        <taxon>Pseudomonas paraeruginosa</taxon>
    </lineage>
</organism>
<accession>A6VC67</accession>